<feature type="chain" id="PRO_1000015746" description="Elongation factor Tu">
    <location>
        <begin position="1"/>
        <end position="397"/>
    </location>
</feature>
<feature type="domain" description="tr-type G">
    <location>
        <begin position="10"/>
        <end position="207"/>
    </location>
</feature>
<feature type="region of interest" description="G1" evidence="1">
    <location>
        <begin position="19"/>
        <end position="26"/>
    </location>
</feature>
<feature type="region of interest" description="G2" evidence="1">
    <location>
        <begin position="61"/>
        <end position="65"/>
    </location>
</feature>
<feature type="region of interest" description="G3" evidence="1">
    <location>
        <begin position="82"/>
        <end position="85"/>
    </location>
</feature>
<feature type="region of interest" description="G4" evidence="1">
    <location>
        <begin position="137"/>
        <end position="140"/>
    </location>
</feature>
<feature type="region of interest" description="G5" evidence="1">
    <location>
        <begin position="175"/>
        <end position="177"/>
    </location>
</feature>
<feature type="binding site" evidence="2">
    <location>
        <begin position="19"/>
        <end position="26"/>
    </location>
    <ligand>
        <name>GTP</name>
        <dbReference type="ChEBI" id="CHEBI:37565"/>
    </ligand>
</feature>
<feature type="binding site" evidence="2">
    <location>
        <position position="26"/>
    </location>
    <ligand>
        <name>Mg(2+)</name>
        <dbReference type="ChEBI" id="CHEBI:18420"/>
    </ligand>
</feature>
<feature type="binding site" evidence="2">
    <location>
        <begin position="82"/>
        <end position="86"/>
    </location>
    <ligand>
        <name>GTP</name>
        <dbReference type="ChEBI" id="CHEBI:37565"/>
    </ligand>
</feature>
<feature type="binding site" evidence="2">
    <location>
        <begin position="137"/>
        <end position="140"/>
    </location>
    <ligand>
        <name>GTP</name>
        <dbReference type="ChEBI" id="CHEBI:37565"/>
    </ligand>
</feature>
<organism>
    <name type="scientific">Sphingopyxis alaskensis (strain DSM 13593 / LMG 18877 / RB2256)</name>
    <name type="common">Sphingomonas alaskensis</name>
    <dbReference type="NCBI Taxonomy" id="317655"/>
    <lineage>
        <taxon>Bacteria</taxon>
        <taxon>Pseudomonadati</taxon>
        <taxon>Pseudomonadota</taxon>
        <taxon>Alphaproteobacteria</taxon>
        <taxon>Sphingomonadales</taxon>
        <taxon>Sphingomonadaceae</taxon>
        <taxon>Sphingopyxis</taxon>
    </lineage>
</organism>
<protein>
    <recommendedName>
        <fullName evidence="2">Elongation factor Tu</fullName>
        <shortName evidence="2">EF-Tu</shortName>
        <ecNumber evidence="2">3.6.5.3</ecNumber>
    </recommendedName>
</protein>
<name>EFTU_SPHAL</name>
<dbReference type="EC" id="3.6.5.3" evidence="2"/>
<dbReference type="EMBL" id="CP000356">
    <property type="protein sequence ID" value="ABF54525.1"/>
    <property type="molecule type" value="Genomic_DNA"/>
</dbReference>
<dbReference type="RefSeq" id="WP_011543090.1">
    <property type="nucleotide sequence ID" value="NC_008048.1"/>
</dbReference>
<dbReference type="SMR" id="Q1GP97"/>
<dbReference type="STRING" id="317655.Sala_2820"/>
<dbReference type="KEGG" id="sal:Sala_2820"/>
<dbReference type="eggNOG" id="COG0050">
    <property type="taxonomic scope" value="Bacteria"/>
</dbReference>
<dbReference type="HOGENOM" id="CLU_007265_0_1_5"/>
<dbReference type="OrthoDB" id="9804504at2"/>
<dbReference type="Proteomes" id="UP000006578">
    <property type="component" value="Chromosome"/>
</dbReference>
<dbReference type="GO" id="GO:0005829">
    <property type="term" value="C:cytosol"/>
    <property type="evidence" value="ECO:0007669"/>
    <property type="project" value="TreeGrafter"/>
</dbReference>
<dbReference type="GO" id="GO:0005525">
    <property type="term" value="F:GTP binding"/>
    <property type="evidence" value="ECO:0007669"/>
    <property type="project" value="UniProtKB-UniRule"/>
</dbReference>
<dbReference type="GO" id="GO:0003924">
    <property type="term" value="F:GTPase activity"/>
    <property type="evidence" value="ECO:0007669"/>
    <property type="project" value="InterPro"/>
</dbReference>
<dbReference type="GO" id="GO:0097216">
    <property type="term" value="F:guanosine tetraphosphate binding"/>
    <property type="evidence" value="ECO:0007669"/>
    <property type="project" value="UniProtKB-ARBA"/>
</dbReference>
<dbReference type="GO" id="GO:0003746">
    <property type="term" value="F:translation elongation factor activity"/>
    <property type="evidence" value="ECO:0007669"/>
    <property type="project" value="UniProtKB-UniRule"/>
</dbReference>
<dbReference type="CDD" id="cd01884">
    <property type="entry name" value="EF_Tu"/>
    <property type="match status" value="1"/>
</dbReference>
<dbReference type="CDD" id="cd03697">
    <property type="entry name" value="EFTU_II"/>
    <property type="match status" value="1"/>
</dbReference>
<dbReference type="CDD" id="cd03707">
    <property type="entry name" value="EFTU_III"/>
    <property type="match status" value="1"/>
</dbReference>
<dbReference type="FunFam" id="2.40.30.10:FF:000001">
    <property type="entry name" value="Elongation factor Tu"/>
    <property type="match status" value="1"/>
</dbReference>
<dbReference type="FunFam" id="3.40.50.300:FF:000003">
    <property type="entry name" value="Elongation factor Tu"/>
    <property type="match status" value="1"/>
</dbReference>
<dbReference type="Gene3D" id="3.40.50.300">
    <property type="entry name" value="P-loop containing nucleotide triphosphate hydrolases"/>
    <property type="match status" value="1"/>
</dbReference>
<dbReference type="Gene3D" id="2.40.30.10">
    <property type="entry name" value="Translation factors"/>
    <property type="match status" value="2"/>
</dbReference>
<dbReference type="HAMAP" id="MF_00118_B">
    <property type="entry name" value="EF_Tu_B"/>
    <property type="match status" value="1"/>
</dbReference>
<dbReference type="InterPro" id="IPR041709">
    <property type="entry name" value="EF-Tu_GTP-bd"/>
</dbReference>
<dbReference type="InterPro" id="IPR050055">
    <property type="entry name" value="EF-Tu_GTPase"/>
</dbReference>
<dbReference type="InterPro" id="IPR004161">
    <property type="entry name" value="EFTu-like_2"/>
</dbReference>
<dbReference type="InterPro" id="IPR033720">
    <property type="entry name" value="EFTU_2"/>
</dbReference>
<dbReference type="InterPro" id="IPR031157">
    <property type="entry name" value="G_TR_CS"/>
</dbReference>
<dbReference type="InterPro" id="IPR027417">
    <property type="entry name" value="P-loop_NTPase"/>
</dbReference>
<dbReference type="InterPro" id="IPR005225">
    <property type="entry name" value="Small_GTP-bd"/>
</dbReference>
<dbReference type="InterPro" id="IPR000795">
    <property type="entry name" value="T_Tr_GTP-bd_dom"/>
</dbReference>
<dbReference type="InterPro" id="IPR009000">
    <property type="entry name" value="Transl_B-barrel_sf"/>
</dbReference>
<dbReference type="InterPro" id="IPR009001">
    <property type="entry name" value="Transl_elong_EF1A/Init_IF2_C"/>
</dbReference>
<dbReference type="InterPro" id="IPR004541">
    <property type="entry name" value="Transl_elong_EFTu/EF1A_bac/org"/>
</dbReference>
<dbReference type="InterPro" id="IPR004160">
    <property type="entry name" value="Transl_elong_EFTu/EF1A_C"/>
</dbReference>
<dbReference type="NCBIfam" id="TIGR00485">
    <property type="entry name" value="EF-Tu"/>
    <property type="match status" value="1"/>
</dbReference>
<dbReference type="NCBIfam" id="NF000766">
    <property type="entry name" value="PRK00049.1"/>
    <property type="match status" value="1"/>
</dbReference>
<dbReference type="NCBIfam" id="NF009372">
    <property type="entry name" value="PRK12735.1"/>
    <property type="match status" value="1"/>
</dbReference>
<dbReference type="NCBIfam" id="NF009373">
    <property type="entry name" value="PRK12736.1"/>
    <property type="match status" value="1"/>
</dbReference>
<dbReference type="NCBIfam" id="TIGR00231">
    <property type="entry name" value="small_GTP"/>
    <property type="match status" value="1"/>
</dbReference>
<dbReference type="PANTHER" id="PTHR43721:SF22">
    <property type="entry name" value="ELONGATION FACTOR TU, MITOCHONDRIAL"/>
    <property type="match status" value="1"/>
</dbReference>
<dbReference type="PANTHER" id="PTHR43721">
    <property type="entry name" value="ELONGATION FACTOR TU-RELATED"/>
    <property type="match status" value="1"/>
</dbReference>
<dbReference type="Pfam" id="PF00009">
    <property type="entry name" value="GTP_EFTU"/>
    <property type="match status" value="1"/>
</dbReference>
<dbReference type="Pfam" id="PF03144">
    <property type="entry name" value="GTP_EFTU_D2"/>
    <property type="match status" value="1"/>
</dbReference>
<dbReference type="Pfam" id="PF03143">
    <property type="entry name" value="GTP_EFTU_D3"/>
    <property type="match status" value="1"/>
</dbReference>
<dbReference type="PRINTS" id="PR00315">
    <property type="entry name" value="ELONGATNFCT"/>
</dbReference>
<dbReference type="SUPFAM" id="SSF50465">
    <property type="entry name" value="EF-Tu/eEF-1alpha/eIF2-gamma C-terminal domain"/>
    <property type="match status" value="1"/>
</dbReference>
<dbReference type="SUPFAM" id="SSF52540">
    <property type="entry name" value="P-loop containing nucleoside triphosphate hydrolases"/>
    <property type="match status" value="1"/>
</dbReference>
<dbReference type="SUPFAM" id="SSF50447">
    <property type="entry name" value="Translation proteins"/>
    <property type="match status" value="1"/>
</dbReference>
<dbReference type="PROSITE" id="PS00301">
    <property type="entry name" value="G_TR_1"/>
    <property type="match status" value="1"/>
</dbReference>
<dbReference type="PROSITE" id="PS51722">
    <property type="entry name" value="G_TR_2"/>
    <property type="match status" value="1"/>
</dbReference>
<gene>
    <name evidence="2" type="primary">tuf</name>
    <name type="ordered locus">Sala_2820</name>
</gene>
<comment type="function">
    <text evidence="2">GTP hydrolase that promotes the GTP-dependent binding of aminoacyl-tRNA to the A-site of ribosomes during protein biosynthesis.</text>
</comment>
<comment type="catalytic activity">
    <reaction evidence="2">
        <text>GTP + H2O = GDP + phosphate + H(+)</text>
        <dbReference type="Rhea" id="RHEA:19669"/>
        <dbReference type="ChEBI" id="CHEBI:15377"/>
        <dbReference type="ChEBI" id="CHEBI:15378"/>
        <dbReference type="ChEBI" id="CHEBI:37565"/>
        <dbReference type="ChEBI" id="CHEBI:43474"/>
        <dbReference type="ChEBI" id="CHEBI:58189"/>
        <dbReference type="EC" id="3.6.5.3"/>
    </reaction>
    <physiologicalReaction direction="left-to-right" evidence="2">
        <dbReference type="Rhea" id="RHEA:19670"/>
    </physiologicalReaction>
</comment>
<comment type="subunit">
    <text evidence="2">Monomer.</text>
</comment>
<comment type="subcellular location">
    <subcellularLocation>
        <location evidence="2">Cytoplasm</location>
    </subcellularLocation>
</comment>
<comment type="similarity">
    <text evidence="2">Belongs to the TRAFAC class translation factor GTPase superfamily. Classic translation factor GTPase family. EF-Tu/EF-1A subfamily.</text>
</comment>
<keyword id="KW-0963">Cytoplasm</keyword>
<keyword id="KW-0251">Elongation factor</keyword>
<keyword id="KW-0342">GTP-binding</keyword>
<keyword id="KW-0378">Hydrolase</keyword>
<keyword id="KW-0460">Magnesium</keyword>
<keyword id="KW-0479">Metal-binding</keyword>
<keyword id="KW-0547">Nucleotide-binding</keyword>
<keyword id="KW-0648">Protein biosynthesis</keyword>
<keyword id="KW-1185">Reference proteome</keyword>
<evidence type="ECO:0000250" key="1"/>
<evidence type="ECO:0000255" key="2">
    <source>
        <dbReference type="HAMAP-Rule" id="MF_00118"/>
    </source>
</evidence>
<sequence length="397" mass="42953">MAKAKFERTKPHCNIGTIGHVDHGKTSLTAAITKVLAENVAGNAAVDFANIDKAPEERERGITISTAHVEYETESRHYAHVDCPGHADYVKNMITGAAQMDGAILVVSAADGPMPQTKEHILLAKQVGVPTMVVFLNKVDQLDDPELLELVELEIREELSKRDFDGDNIPIIAGSALAALEGRDDNIGKDAILKLMAAVDEWIPQPERPLDKPFLMPIEDVFSISGRGTVVTGRVETGVVKVGEEVEIVGIKDTKKTVVTGVEMFRKLLDQGQAGDNIGALIRGVGREEVERGQVLAKPGSITPHTEFTSEVYVLSKDEGGRHTPFFANYRPQFYFRTTDVTGEVILPEGTEMVMPGDNVQLSVKLIAPIAMDPGLRFAIREGGRTVGAGVVATVTK</sequence>
<accession>Q1GP97</accession>
<proteinExistence type="inferred from homology"/>
<reference key="1">
    <citation type="journal article" date="2009" name="Proc. Natl. Acad. Sci. U.S.A.">
        <title>The genomic basis of trophic strategy in marine bacteria.</title>
        <authorList>
            <person name="Lauro F.M."/>
            <person name="McDougald D."/>
            <person name="Thomas T."/>
            <person name="Williams T.J."/>
            <person name="Egan S."/>
            <person name="Rice S."/>
            <person name="DeMaere M.Z."/>
            <person name="Ting L."/>
            <person name="Ertan H."/>
            <person name="Johnson J."/>
            <person name="Ferriera S."/>
            <person name="Lapidus A."/>
            <person name="Anderson I."/>
            <person name="Kyrpides N."/>
            <person name="Munk A.C."/>
            <person name="Detter C."/>
            <person name="Han C.S."/>
            <person name="Brown M.V."/>
            <person name="Robb F.T."/>
            <person name="Kjelleberg S."/>
            <person name="Cavicchioli R."/>
        </authorList>
    </citation>
    <scope>NUCLEOTIDE SEQUENCE [LARGE SCALE GENOMIC DNA]</scope>
    <source>
        <strain>DSM 13593 / LMG 18877 / RB2256</strain>
    </source>
</reference>